<name>LHB4_RHOPA</name>
<reference key="1">
    <citation type="journal article" date="1989" name="EMBO J.">
        <title>Multiple copies of the coding regions for the light-harvesting B800-850 alpha- and beta-polypeptides are present in the Rhodopseudomonas palustris genome.</title>
        <authorList>
            <person name="Tadros M.H."/>
            <person name="Waterkamp K."/>
        </authorList>
    </citation>
    <scope>NUCLEOTIDE SEQUENCE [GENOMIC DNA]</scope>
    <source>
        <strain>1E5</strain>
    </source>
</reference>
<reference key="2">
    <citation type="book" date="1990" name="Current research in photosynthesis">
        <editorList>
            <person name="Baltscheffsky M."/>
        </editorList>
        <authorList>
            <person name="Brunisholz R.A."/>
            <person name="Evans M.B."/>
            <person name="Cogdell R.J."/>
            <person name="Frank G."/>
            <person name="Zuber H."/>
        </authorList>
    </citation>
    <scope>PROTEIN SEQUENCE</scope>
    <source>
        <strain>2.6.1 / French</strain>
    </source>
</reference>
<reference key="3">
    <citation type="journal article" date="2004" name="Nat. Biotechnol.">
        <title>Complete genome sequence of the metabolically versatile photosynthetic bacterium Rhodopseudomonas palustris.</title>
        <authorList>
            <person name="Larimer F.W."/>
            <person name="Chain P."/>
            <person name="Hauser L."/>
            <person name="Lamerdin J.E."/>
            <person name="Malfatti S."/>
            <person name="Do L."/>
            <person name="Land M.L."/>
            <person name="Pelletier D.A."/>
            <person name="Beatty J.T."/>
            <person name="Lang A.S."/>
            <person name="Tabita F.R."/>
            <person name="Gibson J.L."/>
            <person name="Hanson T.E."/>
            <person name="Bobst C."/>
            <person name="Torres y Torres J.L."/>
            <person name="Peres C."/>
            <person name="Harrison F.H."/>
            <person name="Gibson J."/>
            <person name="Harwood C.S."/>
        </authorList>
    </citation>
    <scope>NUCLEOTIDE SEQUENCE [LARGE SCALE GENOMIC DNA]</scope>
    <source>
        <strain>ATCC BAA-98 / CGA009</strain>
    </source>
</reference>
<proteinExistence type="evidence at protein level"/>
<evidence type="ECO:0000255" key="1"/>
<evidence type="ECO:0000305" key="2"/>
<evidence type="ECO:0007829" key="3">
    <source>
        <dbReference type="PDB" id="7ZE3"/>
    </source>
</evidence>
<comment type="function">
    <text>Antenna complexes are light-harvesting systems, which transfer the excitation energy to the reaction centers.</text>
</comment>
<comment type="subunit">
    <text>The core complex is formed by different alpha and beta chains, binding bacteriochlorophyll molecules, and arranged most probably in tetrameric structures disposed around the reaction center. The non-pigmented gamma chains may constitute additional components.</text>
</comment>
<comment type="subcellular location">
    <subcellularLocation>
        <location>Cell inner membrane</location>
        <topology>Single-pass type II membrane protein</topology>
    </subcellularLocation>
</comment>
<comment type="similarity">
    <text evidence="2">Belongs to the antenna complex beta subunit family.</text>
</comment>
<accession>P35109</accession>
<protein>
    <recommendedName>
        <fullName>Light-harvesting protein B-800-850 beta chain D</fullName>
    </recommendedName>
    <alternativeName>
        <fullName>Antenna pigment protein beta chain D</fullName>
    </alternativeName>
    <alternativeName>
        <fullName>LH II-D beta</fullName>
    </alternativeName>
</protein>
<dbReference type="EMBL" id="X64959">
    <property type="protein sequence ID" value="CAA46123.1"/>
    <property type="molecule type" value="Genomic_DNA"/>
</dbReference>
<dbReference type="EMBL" id="BX572602">
    <property type="protein sequence ID" value="CAE28454.1"/>
    <property type="molecule type" value="Genomic_DNA"/>
</dbReference>
<dbReference type="PDB" id="7ZE3">
    <property type="method" value="EM"/>
    <property type="resolution" value="2.70 A"/>
    <property type="chains" value="B/D/F/H/J/L/N/P/R=1-51"/>
</dbReference>
<dbReference type="PDBsum" id="7ZE3"/>
<dbReference type="SMR" id="P35109"/>
<dbReference type="STRING" id="258594.RPA3013"/>
<dbReference type="eggNOG" id="ENOG50331U4">
    <property type="taxonomic scope" value="Bacteria"/>
</dbReference>
<dbReference type="HOGENOM" id="CLU_199082_1_0_5"/>
<dbReference type="PhylomeDB" id="P35109"/>
<dbReference type="GO" id="GO:0005886">
    <property type="term" value="C:plasma membrane"/>
    <property type="evidence" value="ECO:0007669"/>
    <property type="project" value="UniProtKB-SubCell"/>
</dbReference>
<dbReference type="GO" id="GO:0030077">
    <property type="term" value="C:plasma membrane light-harvesting complex"/>
    <property type="evidence" value="ECO:0007669"/>
    <property type="project" value="InterPro"/>
</dbReference>
<dbReference type="GO" id="GO:0042314">
    <property type="term" value="F:bacteriochlorophyll binding"/>
    <property type="evidence" value="ECO:0007669"/>
    <property type="project" value="UniProtKB-KW"/>
</dbReference>
<dbReference type="GO" id="GO:0045156">
    <property type="term" value="F:electron transporter, transferring electrons within the cyclic electron transport pathway of photosynthesis activity"/>
    <property type="evidence" value="ECO:0007669"/>
    <property type="project" value="InterPro"/>
</dbReference>
<dbReference type="GO" id="GO:0046872">
    <property type="term" value="F:metal ion binding"/>
    <property type="evidence" value="ECO:0007669"/>
    <property type="project" value="UniProtKB-KW"/>
</dbReference>
<dbReference type="GO" id="GO:0019684">
    <property type="term" value="P:photosynthesis, light reaction"/>
    <property type="evidence" value="ECO:0007669"/>
    <property type="project" value="InterPro"/>
</dbReference>
<dbReference type="Gene3D" id="1.20.5.250">
    <property type="match status" value="1"/>
</dbReference>
<dbReference type="InterPro" id="IPR000066">
    <property type="entry name" value="Antenna_a/b"/>
</dbReference>
<dbReference type="InterPro" id="IPR023623">
    <property type="entry name" value="Antenna_beta_CS"/>
</dbReference>
<dbReference type="InterPro" id="IPR023624">
    <property type="entry name" value="Antenna_beta_dom_sf"/>
</dbReference>
<dbReference type="InterPro" id="IPR002362">
    <property type="entry name" value="LHB-1/5"/>
</dbReference>
<dbReference type="InterPro" id="IPR035889">
    <property type="entry name" value="Light-harvesting_complex"/>
</dbReference>
<dbReference type="NCBIfam" id="NF040862">
    <property type="entry name" value="pufB_517_ASD"/>
    <property type="match status" value="1"/>
</dbReference>
<dbReference type="Pfam" id="PF00556">
    <property type="entry name" value="LHC"/>
    <property type="match status" value="1"/>
</dbReference>
<dbReference type="PIRSF" id="PIRSF002900">
    <property type="entry name" value="Antenna_beta"/>
    <property type="match status" value="1"/>
</dbReference>
<dbReference type="PRINTS" id="PR00674">
    <property type="entry name" value="LIGHTHARVSTB"/>
</dbReference>
<dbReference type="SUPFAM" id="SSF56918">
    <property type="entry name" value="Light-harvesting complex subunits"/>
    <property type="match status" value="1"/>
</dbReference>
<dbReference type="PROSITE" id="PS00969">
    <property type="entry name" value="ANTENNA_COMP_BETA"/>
    <property type="match status" value="1"/>
</dbReference>
<gene>
    <name type="primary">pucBD</name>
    <name type="ordered locus">RPA3013</name>
</gene>
<organism>
    <name type="scientific">Rhodopseudomonas palustris (strain ATCC BAA-98 / CGA009)</name>
    <dbReference type="NCBI Taxonomy" id="258594"/>
    <lineage>
        <taxon>Bacteria</taxon>
        <taxon>Pseudomonadati</taxon>
        <taxon>Pseudomonadota</taxon>
        <taxon>Alphaproteobacteria</taxon>
        <taxon>Hyphomicrobiales</taxon>
        <taxon>Nitrobacteraceae</taxon>
        <taxon>Rhodopseudomonas</taxon>
    </lineage>
</organism>
<sequence>MVDDPNKVWPTGLTIAESEELHKHVIDGSRIFVAIAIVAHFLAYVYSPWLH</sequence>
<feature type="chain" id="PRO_0000099832" description="Light-harvesting protein B-800-850 beta chain D">
    <location>
        <begin position="1"/>
        <end position="51"/>
    </location>
</feature>
<feature type="topological domain" description="Cytoplasmic" evidence="1">
    <location>
        <begin position="1"/>
        <end position="23"/>
    </location>
</feature>
<feature type="transmembrane region" description="Helical" evidence="1">
    <location>
        <begin position="24"/>
        <end position="46"/>
    </location>
</feature>
<feature type="topological domain" description="Periplasmic" evidence="1">
    <location>
        <begin position="47"/>
        <end position="51"/>
    </location>
</feature>
<feature type="binding site" description="axial binding residue" evidence="1">
    <location>
        <position position="22"/>
    </location>
    <ligand>
        <name>a bacteriochlorophyll</name>
        <dbReference type="ChEBI" id="CHEBI:38201"/>
    </ligand>
    <ligandPart>
        <name>Mg</name>
        <dbReference type="ChEBI" id="CHEBI:25107"/>
    </ligandPart>
</feature>
<feature type="binding site" description="axial binding residue" evidence="1">
    <location>
        <position position="40"/>
    </location>
    <ligand>
        <name>a bacteriochlorophyll</name>
        <dbReference type="ChEBI" id="CHEBI:38201"/>
    </ligand>
    <ligandPart>
        <name>Mg</name>
        <dbReference type="ChEBI" id="CHEBI:25107"/>
    </ligandPart>
</feature>
<feature type="helix" evidence="3">
    <location>
        <begin position="4"/>
        <end position="6"/>
    </location>
</feature>
<feature type="helix" evidence="3">
    <location>
        <begin position="15"/>
        <end position="46"/>
    </location>
</feature>
<keyword id="KW-0002">3D-structure</keyword>
<keyword id="KW-0042">Antenna complex</keyword>
<keyword id="KW-0076">Bacteriochlorophyll</keyword>
<keyword id="KW-0997">Cell inner membrane</keyword>
<keyword id="KW-1003">Cell membrane</keyword>
<keyword id="KW-0148">Chlorophyll</keyword>
<keyword id="KW-0157">Chromophore</keyword>
<keyword id="KW-0903">Direct protein sequencing</keyword>
<keyword id="KW-0437">Light-harvesting polypeptide</keyword>
<keyword id="KW-0460">Magnesium</keyword>
<keyword id="KW-0472">Membrane</keyword>
<keyword id="KW-0479">Metal-binding</keyword>
<keyword id="KW-0812">Transmembrane</keyword>
<keyword id="KW-1133">Transmembrane helix</keyword>